<dbReference type="EC" id="7.1.2.2" evidence="1"/>
<dbReference type="EMBL" id="FM209186">
    <property type="protein sequence ID" value="CAW30706.1"/>
    <property type="molecule type" value="Genomic_DNA"/>
</dbReference>
<dbReference type="RefSeq" id="WP_003097134.1">
    <property type="nucleotide sequence ID" value="NC_011770.1"/>
</dbReference>
<dbReference type="SMR" id="B7V793"/>
<dbReference type="GeneID" id="77224109"/>
<dbReference type="KEGG" id="pag:PLES_59521"/>
<dbReference type="HOGENOM" id="CLU_010091_2_1_6"/>
<dbReference type="GO" id="GO:0005886">
    <property type="term" value="C:plasma membrane"/>
    <property type="evidence" value="ECO:0007669"/>
    <property type="project" value="UniProtKB-SubCell"/>
</dbReference>
<dbReference type="GO" id="GO:0045259">
    <property type="term" value="C:proton-transporting ATP synthase complex"/>
    <property type="evidence" value="ECO:0007669"/>
    <property type="project" value="UniProtKB-KW"/>
</dbReference>
<dbReference type="GO" id="GO:0043531">
    <property type="term" value="F:ADP binding"/>
    <property type="evidence" value="ECO:0007669"/>
    <property type="project" value="TreeGrafter"/>
</dbReference>
<dbReference type="GO" id="GO:0005524">
    <property type="term" value="F:ATP binding"/>
    <property type="evidence" value="ECO:0007669"/>
    <property type="project" value="UniProtKB-UniRule"/>
</dbReference>
<dbReference type="GO" id="GO:0046933">
    <property type="term" value="F:proton-transporting ATP synthase activity, rotational mechanism"/>
    <property type="evidence" value="ECO:0007669"/>
    <property type="project" value="UniProtKB-UniRule"/>
</dbReference>
<dbReference type="CDD" id="cd18113">
    <property type="entry name" value="ATP-synt_F1_alpha_C"/>
    <property type="match status" value="1"/>
</dbReference>
<dbReference type="CDD" id="cd18116">
    <property type="entry name" value="ATP-synt_F1_alpha_N"/>
    <property type="match status" value="1"/>
</dbReference>
<dbReference type="CDD" id="cd01132">
    <property type="entry name" value="F1-ATPase_alpha_CD"/>
    <property type="match status" value="1"/>
</dbReference>
<dbReference type="FunFam" id="1.20.150.20:FF:000001">
    <property type="entry name" value="ATP synthase subunit alpha"/>
    <property type="match status" value="1"/>
</dbReference>
<dbReference type="FunFam" id="2.40.30.20:FF:000001">
    <property type="entry name" value="ATP synthase subunit alpha"/>
    <property type="match status" value="1"/>
</dbReference>
<dbReference type="FunFam" id="3.40.50.300:FF:000002">
    <property type="entry name" value="ATP synthase subunit alpha"/>
    <property type="match status" value="1"/>
</dbReference>
<dbReference type="Gene3D" id="2.40.30.20">
    <property type="match status" value="1"/>
</dbReference>
<dbReference type="Gene3D" id="1.20.150.20">
    <property type="entry name" value="ATP synthase alpha/beta chain, C-terminal domain"/>
    <property type="match status" value="1"/>
</dbReference>
<dbReference type="Gene3D" id="3.40.50.300">
    <property type="entry name" value="P-loop containing nucleotide triphosphate hydrolases"/>
    <property type="match status" value="1"/>
</dbReference>
<dbReference type="HAMAP" id="MF_01346">
    <property type="entry name" value="ATP_synth_alpha_bact"/>
    <property type="match status" value="1"/>
</dbReference>
<dbReference type="InterPro" id="IPR023366">
    <property type="entry name" value="ATP_synth_asu-like_sf"/>
</dbReference>
<dbReference type="InterPro" id="IPR000793">
    <property type="entry name" value="ATP_synth_asu_C"/>
</dbReference>
<dbReference type="InterPro" id="IPR038376">
    <property type="entry name" value="ATP_synth_asu_C_sf"/>
</dbReference>
<dbReference type="InterPro" id="IPR033732">
    <property type="entry name" value="ATP_synth_F1_a_nt-bd_dom"/>
</dbReference>
<dbReference type="InterPro" id="IPR005294">
    <property type="entry name" value="ATP_synth_F1_asu"/>
</dbReference>
<dbReference type="InterPro" id="IPR020003">
    <property type="entry name" value="ATPase_a/bsu_AS"/>
</dbReference>
<dbReference type="InterPro" id="IPR004100">
    <property type="entry name" value="ATPase_F1/V1/A1_a/bsu_N"/>
</dbReference>
<dbReference type="InterPro" id="IPR036121">
    <property type="entry name" value="ATPase_F1/V1/A1_a/bsu_N_sf"/>
</dbReference>
<dbReference type="InterPro" id="IPR000194">
    <property type="entry name" value="ATPase_F1/V1/A1_a/bsu_nucl-bd"/>
</dbReference>
<dbReference type="InterPro" id="IPR027417">
    <property type="entry name" value="P-loop_NTPase"/>
</dbReference>
<dbReference type="NCBIfam" id="TIGR00962">
    <property type="entry name" value="atpA"/>
    <property type="match status" value="1"/>
</dbReference>
<dbReference type="NCBIfam" id="NF009884">
    <property type="entry name" value="PRK13343.1"/>
    <property type="match status" value="1"/>
</dbReference>
<dbReference type="PANTHER" id="PTHR48082">
    <property type="entry name" value="ATP SYNTHASE SUBUNIT ALPHA, MITOCHONDRIAL"/>
    <property type="match status" value="1"/>
</dbReference>
<dbReference type="PANTHER" id="PTHR48082:SF2">
    <property type="entry name" value="ATP SYNTHASE SUBUNIT ALPHA, MITOCHONDRIAL"/>
    <property type="match status" value="1"/>
</dbReference>
<dbReference type="Pfam" id="PF00006">
    <property type="entry name" value="ATP-synt_ab"/>
    <property type="match status" value="1"/>
</dbReference>
<dbReference type="Pfam" id="PF00306">
    <property type="entry name" value="ATP-synt_ab_C"/>
    <property type="match status" value="1"/>
</dbReference>
<dbReference type="Pfam" id="PF02874">
    <property type="entry name" value="ATP-synt_ab_N"/>
    <property type="match status" value="1"/>
</dbReference>
<dbReference type="PIRSF" id="PIRSF039088">
    <property type="entry name" value="F_ATPase_subunit_alpha"/>
    <property type="match status" value="1"/>
</dbReference>
<dbReference type="SUPFAM" id="SSF47917">
    <property type="entry name" value="C-terminal domain of alpha and beta subunits of F1 ATP synthase"/>
    <property type="match status" value="1"/>
</dbReference>
<dbReference type="SUPFAM" id="SSF50615">
    <property type="entry name" value="N-terminal domain of alpha and beta subunits of F1 ATP synthase"/>
    <property type="match status" value="1"/>
</dbReference>
<dbReference type="SUPFAM" id="SSF52540">
    <property type="entry name" value="P-loop containing nucleoside triphosphate hydrolases"/>
    <property type="match status" value="1"/>
</dbReference>
<dbReference type="PROSITE" id="PS00152">
    <property type="entry name" value="ATPASE_ALPHA_BETA"/>
    <property type="match status" value="1"/>
</dbReference>
<proteinExistence type="inferred from homology"/>
<evidence type="ECO:0000255" key="1">
    <source>
        <dbReference type="HAMAP-Rule" id="MF_01346"/>
    </source>
</evidence>
<comment type="function">
    <text evidence="1">Produces ATP from ADP in the presence of a proton gradient across the membrane. The alpha chain is a regulatory subunit.</text>
</comment>
<comment type="catalytic activity">
    <reaction evidence="1">
        <text>ATP + H2O + 4 H(+)(in) = ADP + phosphate + 5 H(+)(out)</text>
        <dbReference type="Rhea" id="RHEA:57720"/>
        <dbReference type="ChEBI" id="CHEBI:15377"/>
        <dbReference type="ChEBI" id="CHEBI:15378"/>
        <dbReference type="ChEBI" id="CHEBI:30616"/>
        <dbReference type="ChEBI" id="CHEBI:43474"/>
        <dbReference type="ChEBI" id="CHEBI:456216"/>
        <dbReference type="EC" id="7.1.2.2"/>
    </reaction>
</comment>
<comment type="subunit">
    <text evidence="1">F-type ATPases have 2 components, CF(1) - the catalytic core - and CF(0) - the membrane proton channel. CF(1) has five subunits: alpha(3), beta(3), gamma(1), delta(1), epsilon(1). CF(0) has three main subunits: a(1), b(2) and c(9-12). The alpha and beta chains form an alternating ring which encloses part of the gamma chain. CF(1) is attached to CF(0) by a central stalk formed by the gamma and epsilon chains, while a peripheral stalk is formed by the delta and b chains.</text>
</comment>
<comment type="subcellular location">
    <subcellularLocation>
        <location evidence="1">Cell inner membrane</location>
        <topology evidence="1">Peripheral membrane protein</topology>
    </subcellularLocation>
</comment>
<comment type="similarity">
    <text evidence="1">Belongs to the ATPase alpha/beta chains family.</text>
</comment>
<protein>
    <recommendedName>
        <fullName evidence="1">ATP synthase subunit alpha</fullName>
        <ecNumber evidence="1">7.1.2.2</ecNumber>
    </recommendedName>
    <alternativeName>
        <fullName evidence="1">ATP synthase F1 sector subunit alpha</fullName>
    </alternativeName>
    <alternativeName>
        <fullName evidence="1">F-ATPase subunit alpha</fullName>
    </alternativeName>
</protein>
<keyword id="KW-0066">ATP synthesis</keyword>
<keyword id="KW-0067">ATP-binding</keyword>
<keyword id="KW-0997">Cell inner membrane</keyword>
<keyword id="KW-1003">Cell membrane</keyword>
<keyword id="KW-0139">CF(1)</keyword>
<keyword id="KW-0375">Hydrogen ion transport</keyword>
<keyword id="KW-0406">Ion transport</keyword>
<keyword id="KW-0472">Membrane</keyword>
<keyword id="KW-0547">Nucleotide-binding</keyword>
<keyword id="KW-1278">Translocase</keyword>
<keyword id="KW-0813">Transport</keyword>
<sequence length="514" mass="55393">MQQLNPSEISEIIKGRIEKLDVASQARNEGTIVSVSDGIVRIYGLADVMYGEMIEFPGGVYGMALNLEQDSVGAVVLGEYQGLAEGMNAKCTGRILEVPVGPELLGRVVDALGNPIDGKGPIDAKATDAVEKVAPGVIWRKSVDQPVQTGYKSVDAMIPVGRGQRELIIGDRQIGKTALAVDAIINQKDSGIKCVYVAIGQKQSTIANVVRKLEENGALANTIVVAASASESAALQYLAPYSGCTMGEYFRDRGEDALIVYDDLSKQAVAYRQISLLLRRPPGREAYPGDVFYLHSRLLERASRVSEEYVEKFTNGAVTGKTGSLTALPIIETQAGDVSAFVPTNVISITDGQIFLESAMFNSGIRPAVNAGISVSRVGGAAQTKIIKKLSGGIRTALAQYRELAAFAQFASDLDEATRKQLEHGQRVTELMKQKQYAPMSIAEMSLSLYAAERGFLQDVEIAKVGSFEQALISYFQREHAALLAKINEKGDFNDEIDAGIKAGIEKFKATQTW</sequence>
<organism>
    <name type="scientific">Pseudomonas aeruginosa (strain LESB58)</name>
    <dbReference type="NCBI Taxonomy" id="557722"/>
    <lineage>
        <taxon>Bacteria</taxon>
        <taxon>Pseudomonadati</taxon>
        <taxon>Pseudomonadota</taxon>
        <taxon>Gammaproteobacteria</taxon>
        <taxon>Pseudomonadales</taxon>
        <taxon>Pseudomonadaceae</taxon>
        <taxon>Pseudomonas</taxon>
    </lineage>
</organism>
<accession>B7V793</accession>
<feature type="chain" id="PRO_1000143423" description="ATP synthase subunit alpha">
    <location>
        <begin position="1"/>
        <end position="514"/>
    </location>
</feature>
<feature type="binding site" evidence="1">
    <location>
        <begin position="170"/>
        <end position="177"/>
    </location>
    <ligand>
        <name>ATP</name>
        <dbReference type="ChEBI" id="CHEBI:30616"/>
    </ligand>
</feature>
<feature type="site" description="Required for activity" evidence="1">
    <location>
        <position position="374"/>
    </location>
</feature>
<reference key="1">
    <citation type="journal article" date="2009" name="Genome Res.">
        <title>Newly introduced genomic prophage islands are critical determinants of in vivo competitiveness in the Liverpool epidemic strain of Pseudomonas aeruginosa.</title>
        <authorList>
            <person name="Winstanley C."/>
            <person name="Langille M.G.I."/>
            <person name="Fothergill J.L."/>
            <person name="Kukavica-Ibrulj I."/>
            <person name="Paradis-Bleau C."/>
            <person name="Sanschagrin F."/>
            <person name="Thomson N.R."/>
            <person name="Winsor G.L."/>
            <person name="Quail M.A."/>
            <person name="Lennard N."/>
            <person name="Bignell A."/>
            <person name="Clarke L."/>
            <person name="Seeger K."/>
            <person name="Saunders D."/>
            <person name="Harris D."/>
            <person name="Parkhill J."/>
            <person name="Hancock R.E.W."/>
            <person name="Brinkman F.S.L."/>
            <person name="Levesque R.C."/>
        </authorList>
    </citation>
    <scope>NUCLEOTIDE SEQUENCE [LARGE SCALE GENOMIC DNA]</scope>
    <source>
        <strain>LESB58</strain>
    </source>
</reference>
<name>ATPA_PSEA8</name>
<gene>
    <name evidence="1" type="primary">atpA</name>
    <name type="ordered locus">PLES_59521</name>
</gene>